<proteinExistence type="inferred from homology"/>
<keyword id="KW-0067">ATP-binding</keyword>
<keyword id="KW-0547">Nucleotide-binding</keyword>
<keyword id="KW-0548">Nucleotidyltransferase</keyword>
<keyword id="KW-1185">Reference proteome</keyword>
<keyword id="KW-0808">Transferase</keyword>
<dbReference type="EC" id="2.7.7.4" evidence="1"/>
<dbReference type="EMBL" id="CP000304">
    <property type="protein sequence ID" value="ABP78747.1"/>
    <property type="molecule type" value="Genomic_DNA"/>
</dbReference>
<dbReference type="RefSeq" id="WP_011912238.1">
    <property type="nucleotide sequence ID" value="NC_009434.1"/>
</dbReference>
<dbReference type="SMR" id="A4VIE6"/>
<dbReference type="KEGG" id="psa:PST_1050"/>
<dbReference type="eggNOG" id="COG0175">
    <property type="taxonomic scope" value="Bacteria"/>
</dbReference>
<dbReference type="HOGENOM" id="CLU_043026_0_0_6"/>
<dbReference type="UniPathway" id="UPA00140">
    <property type="reaction ID" value="UER00204"/>
</dbReference>
<dbReference type="Proteomes" id="UP000000233">
    <property type="component" value="Chromosome"/>
</dbReference>
<dbReference type="GO" id="GO:0005524">
    <property type="term" value="F:ATP binding"/>
    <property type="evidence" value="ECO:0007669"/>
    <property type="project" value="UniProtKB-KW"/>
</dbReference>
<dbReference type="GO" id="GO:0004781">
    <property type="term" value="F:sulfate adenylyltransferase (ATP) activity"/>
    <property type="evidence" value="ECO:0007669"/>
    <property type="project" value="UniProtKB-UniRule"/>
</dbReference>
<dbReference type="GO" id="GO:0070814">
    <property type="term" value="P:hydrogen sulfide biosynthetic process"/>
    <property type="evidence" value="ECO:0007669"/>
    <property type="project" value="UniProtKB-UniRule"/>
</dbReference>
<dbReference type="GO" id="GO:0000103">
    <property type="term" value="P:sulfate assimilation"/>
    <property type="evidence" value="ECO:0007669"/>
    <property type="project" value="UniProtKB-UniRule"/>
</dbReference>
<dbReference type="CDD" id="cd23946">
    <property type="entry name" value="Sulfate_adenylyltransferase_2"/>
    <property type="match status" value="1"/>
</dbReference>
<dbReference type="FunFam" id="3.40.50.620:FF:000002">
    <property type="entry name" value="Sulfate adenylyltransferase subunit 2"/>
    <property type="match status" value="1"/>
</dbReference>
<dbReference type="Gene3D" id="3.40.50.620">
    <property type="entry name" value="HUPs"/>
    <property type="match status" value="1"/>
</dbReference>
<dbReference type="HAMAP" id="MF_00064">
    <property type="entry name" value="Sulf_adenylyltr_sub2"/>
    <property type="match status" value="1"/>
</dbReference>
<dbReference type="InterPro" id="IPR002500">
    <property type="entry name" value="PAPS_reduct_dom"/>
</dbReference>
<dbReference type="InterPro" id="IPR014729">
    <property type="entry name" value="Rossmann-like_a/b/a_fold"/>
</dbReference>
<dbReference type="InterPro" id="IPR011784">
    <property type="entry name" value="SO4_adenylTrfase_ssu"/>
</dbReference>
<dbReference type="InterPro" id="IPR050128">
    <property type="entry name" value="Sulfate_adenylyltrnsfr_sub2"/>
</dbReference>
<dbReference type="NCBIfam" id="TIGR02039">
    <property type="entry name" value="CysD"/>
    <property type="match status" value="1"/>
</dbReference>
<dbReference type="NCBIfam" id="NF003587">
    <property type="entry name" value="PRK05253.1"/>
    <property type="match status" value="1"/>
</dbReference>
<dbReference type="NCBIfam" id="NF009214">
    <property type="entry name" value="PRK12563.1"/>
    <property type="match status" value="1"/>
</dbReference>
<dbReference type="PANTHER" id="PTHR43196">
    <property type="entry name" value="SULFATE ADENYLYLTRANSFERASE SUBUNIT 2"/>
    <property type="match status" value="1"/>
</dbReference>
<dbReference type="PANTHER" id="PTHR43196:SF1">
    <property type="entry name" value="SULFATE ADENYLYLTRANSFERASE SUBUNIT 2"/>
    <property type="match status" value="1"/>
</dbReference>
<dbReference type="Pfam" id="PF01507">
    <property type="entry name" value="PAPS_reduct"/>
    <property type="match status" value="1"/>
</dbReference>
<dbReference type="PIRSF" id="PIRSF002936">
    <property type="entry name" value="CysDAde_trans"/>
    <property type="match status" value="1"/>
</dbReference>
<dbReference type="SUPFAM" id="SSF52402">
    <property type="entry name" value="Adenine nucleotide alpha hydrolases-like"/>
    <property type="match status" value="1"/>
</dbReference>
<sequence>MVDKLTHLKQLEAESIHIIREVAAEFGNPVMLYSIGKDSAVMLHLARKAFFPGKLPFPVLHVDTRWKFQEMYRFREKMVSEMGLDLITHINPDGVAQDMNPFTYGSAKHTDVMKTEGLKQALDKYGFDAAFGGARRDEEKSRAKERVYSFRDSKHRWDPKNQRPELWNLYNGKVKKGESIRVFPLSNWTELDIWQYIYLEQIPIVPLYFAAEREVVELNGTLVMIDDERILSYLTPEQKASIHKKMVRFRTLGCYPLTGAVESTATTLPEIIQEMLLTRTSERQGRVIDHDATGSMEEKKRQGYF</sequence>
<evidence type="ECO:0000255" key="1">
    <source>
        <dbReference type="HAMAP-Rule" id="MF_00064"/>
    </source>
</evidence>
<protein>
    <recommendedName>
        <fullName evidence="1">Sulfate adenylyltransferase subunit 2</fullName>
        <ecNumber evidence="1">2.7.7.4</ecNumber>
    </recommendedName>
    <alternativeName>
        <fullName evidence="1">ATP-sulfurylase small subunit</fullName>
    </alternativeName>
    <alternativeName>
        <fullName evidence="1">Sulfate adenylate transferase</fullName>
        <shortName evidence="1">SAT</shortName>
    </alternativeName>
</protein>
<reference key="1">
    <citation type="journal article" date="2008" name="Proc. Natl. Acad. Sci. U.S.A.">
        <title>Nitrogen fixation island and rhizosphere competence traits in the genome of root-associated Pseudomonas stutzeri A1501.</title>
        <authorList>
            <person name="Yan Y."/>
            <person name="Yang J."/>
            <person name="Dou Y."/>
            <person name="Chen M."/>
            <person name="Ping S."/>
            <person name="Peng J."/>
            <person name="Lu W."/>
            <person name="Zhang W."/>
            <person name="Yao Z."/>
            <person name="Li H."/>
            <person name="Liu W."/>
            <person name="He S."/>
            <person name="Geng L."/>
            <person name="Zhang X."/>
            <person name="Yang F."/>
            <person name="Yu H."/>
            <person name="Zhan Y."/>
            <person name="Li D."/>
            <person name="Lin Z."/>
            <person name="Wang Y."/>
            <person name="Elmerich C."/>
            <person name="Lin M."/>
            <person name="Jin Q."/>
        </authorList>
    </citation>
    <scope>NUCLEOTIDE SEQUENCE [LARGE SCALE GENOMIC DNA]</scope>
    <source>
        <strain>A1501</strain>
    </source>
</reference>
<name>CYSD_STUS1</name>
<accession>A4VIE6</accession>
<feature type="chain" id="PRO_1000008974" description="Sulfate adenylyltransferase subunit 2">
    <location>
        <begin position="1"/>
        <end position="305"/>
    </location>
</feature>
<comment type="function">
    <text evidence="1">With CysN forms the ATP sulfurylase (ATPS) that catalyzes the adenylation of sulfate producing adenosine 5'-phosphosulfate (APS) and diphosphate, the first enzymatic step in sulfur assimilation pathway. APS synthesis involves the formation of a high-energy phosphoric-sulfuric acid anhydride bond driven by GTP hydrolysis by CysN coupled to ATP hydrolysis by CysD.</text>
</comment>
<comment type="catalytic activity">
    <reaction evidence="1">
        <text>sulfate + ATP + H(+) = adenosine 5'-phosphosulfate + diphosphate</text>
        <dbReference type="Rhea" id="RHEA:18133"/>
        <dbReference type="ChEBI" id="CHEBI:15378"/>
        <dbReference type="ChEBI" id="CHEBI:16189"/>
        <dbReference type="ChEBI" id="CHEBI:30616"/>
        <dbReference type="ChEBI" id="CHEBI:33019"/>
        <dbReference type="ChEBI" id="CHEBI:58243"/>
        <dbReference type="EC" id="2.7.7.4"/>
    </reaction>
</comment>
<comment type="pathway">
    <text evidence="1">Sulfur metabolism; hydrogen sulfide biosynthesis; sulfite from sulfate: step 1/3.</text>
</comment>
<comment type="subunit">
    <text evidence="1">Heterodimer composed of CysD, the smaller subunit, and CysN.</text>
</comment>
<comment type="similarity">
    <text evidence="1">Belongs to the PAPS reductase family. CysD subfamily.</text>
</comment>
<organism>
    <name type="scientific">Stutzerimonas stutzeri (strain A1501)</name>
    <name type="common">Pseudomonas stutzeri</name>
    <dbReference type="NCBI Taxonomy" id="379731"/>
    <lineage>
        <taxon>Bacteria</taxon>
        <taxon>Pseudomonadati</taxon>
        <taxon>Pseudomonadota</taxon>
        <taxon>Gammaproteobacteria</taxon>
        <taxon>Pseudomonadales</taxon>
        <taxon>Pseudomonadaceae</taxon>
        <taxon>Stutzerimonas</taxon>
    </lineage>
</organism>
<gene>
    <name evidence="1" type="primary">cysD</name>
    <name type="ordered locus">PST_1050</name>
</gene>